<feature type="chain" id="PRO_1000129817" description="D-alanine--D-alanyl carrier protein ligase">
    <location>
        <begin position="1"/>
        <end position="504"/>
    </location>
</feature>
<feature type="binding site" evidence="1">
    <location>
        <begin position="152"/>
        <end position="153"/>
    </location>
    <ligand>
        <name>ATP</name>
        <dbReference type="ChEBI" id="CHEBI:30616"/>
    </ligand>
</feature>
<feature type="binding site" evidence="1">
    <location>
        <position position="197"/>
    </location>
    <ligand>
        <name>D-alanine</name>
        <dbReference type="ChEBI" id="CHEBI:57416"/>
    </ligand>
</feature>
<feature type="binding site" evidence="1">
    <location>
        <begin position="292"/>
        <end position="297"/>
    </location>
    <ligand>
        <name>ATP</name>
        <dbReference type="ChEBI" id="CHEBI:30616"/>
    </ligand>
</feature>
<feature type="binding site" evidence="1">
    <location>
        <position position="301"/>
    </location>
    <ligand>
        <name>D-alanine</name>
        <dbReference type="ChEBI" id="CHEBI:57416"/>
    </ligand>
</feature>
<feature type="binding site" evidence="1">
    <location>
        <position position="383"/>
    </location>
    <ligand>
        <name>ATP</name>
        <dbReference type="ChEBI" id="CHEBI:30616"/>
    </ligand>
</feature>
<feature type="binding site" evidence="1">
    <location>
        <begin position="394"/>
        <end position="397"/>
    </location>
    <ligand>
        <name>ATP</name>
        <dbReference type="ChEBI" id="CHEBI:30616"/>
    </ligand>
</feature>
<feature type="binding site" evidence="1">
    <location>
        <position position="492"/>
    </location>
    <ligand>
        <name>ATP</name>
        <dbReference type="ChEBI" id="CHEBI:30616"/>
    </ligand>
</feature>
<feature type="binding site" evidence="1">
    <location>
        <position position="492"/>
    </location>
    <ligand>
        <name>D-alanine</name>
        <dbReference type="ChEBI" id="CHEBI:57416"/>
    </ligand>
</feature>
<keyword id="KW-0067">ATP-binding</keyword>
<keyword id="KW-0963">Cytoplasm</keyword>
<keyword id="KW-0436">Ligase</keyword>
<keyword id="KW-0547">Nucleotide-binding</keyword>
<proteinExistence type="inferred from homology"/>
<dbReference type="EC" id="6.2.1.54" evidence="1"/>
<dbReference type="EMBL" id="CP001283">
    <property type="protein sequence ID" value="ACK87788.1"/>
    <property type="molecule type" value="Genomic_DNA"/>
</dbReference>
<dbReference type="RefSeq" id="WP_000770518.1">
    <property type="nucleotide sequence ID" value="NC_011773.1"/>
</dbReference>
<dbReference type="SMR" id="B7JFV5"/>
<dbReference type="KEGG" id="bcu:BCAH820_1461"/>
<dbReference type="HOGENOM" id="CLU_000022_2_12_9"/>
<dbReference type="UniPathway" id="UPA00556"/>
<dbReference type="Proteomes" id="UP000001363">
    <property type="component" value="Chromosome"/>
</dbReference>
<dbReference type="GO" id="GO:0005737">
    <property type="term" value="C:cytoplasm"/>
    <property type="evidence" value="ECO:0007669"/>
    <property type="project" value="UniProtKB-SubCell"/>
</dbReference>
<dbReference type="GO" id="GO:0005524">
    <property type="term" value="F:ATP binding"/>
    <property type="evidence" value="ECO:0007669"/>
    <property type="project" value="UniProtKB-KW"/>
</dbReference>
<dbReference type="GO" id="GO:0047473">
    <property type="term" value="F:D-alanine [D-alanyl carrier protein] ligase activity"/>
    <property type="evidence" value="ECO:0007669"/>
    <property type="project" value="UniProtKB-UniRule"/>
</dbReference>
<dbReference type="GO" id="GO:0070395">
    <property type="term" value="P:lipoteichoic acid biosynthetic process"/>
    <property type="evidence" value="ECO:0007669"/>
    <property type="project" value="UniProtKB-UniRule"/>
</dbReference>
<dbReference type="CDD" id="cd05945">
    <property type="entry name" value="DltA"/>
    <property type="match status" value="1"/>
</dbReference>
<dbReference type="FunFam" id="3.30.300.30:FF:000012">
    <property type="entry name" value="D-alanine--D-alanyl carrier protein ligase"/>
    <property type="match status" value="1"/>
</dbReference>
<dbReference type="FunFam" id="3.40.50.12780:FF:000015">
    <property type="entry name" value="D-alanine--D-alanyl carrier protein ligase"/>
    <property type="match status" value="1"/>
</dbReference>
<dbReference type="Gene3D" id="3.30.300.30">
    <property type="match status" value="1"/>
</dbReference>
<dbReference type="Gene3D" id="3.40.50.12780">
    <property type="entry name" value="N-terminal domain of ligase-like"/>
    <property type="match status" value="1"/>
</dbReference>
<dbReference type="HAMAP" id="MF_00593">
    <property type="entry name" value="DltA"/>
    <property type="match status" value="1"/>
</dbReference>
<dbReference type="InterPro" id="IPR010071">
    <property type="entry name" value="AA_adenyl_dom"/>
</dbReference>
<dbReference type="InterPro" id="IPR025110">
    <property type="entry name" value="AMP-bd_C"/>
</dbReference>
<dbReference type="InterPro" id="IPR045851">
    <property type="entry name" value="AMP-bd_C_sf"/>
</dbReference>
<dbReference type="InterPro" id="IPR020845">
    <property type="entry name" value="AMP-binding_CS"/>
</dbReference>
<dbReference type="InterPro" id="IPR000873">
    <property type="entry name" value="AMP-dep_synth/lig_dom"/>
</dbReference>
<dbReference type="InterPro" id="IPR042099">
    <property type="entry name" value="ANL_N_sf"/>
</dbReference>
<dbReference type="InterPro" id="IPR010072">
    <property type="entry name" value="DltA"/>
</dbReference>
<dbReference type="InterPro" id="IPR044507">
    <property type="entry name" value="DltA-like"/>
</dbReference>
<dbReference type="NCBIfam" id="TIGR01733">
    <property type="entry name" value="AA-adenyl-dom"/>
    <property type="match status" value="1"/>
</dbReference>
<dbReference type="NCBIfam" id="TIGR01734">
    <property type="entry name" value="D-ala-DACP-lig"/>
    <property type="match status" value="1"/>
</dbReference>
<dbReference type="NCBIfam" id="NF003417">
    <property type="entry name" value="PRK04813.1"/>
    <property type="match status" value="1"/>
</dbReference>
<dbReference type="PANTHER" id="PTHR45398">
    <property type="match status" value="1"/>
</dbReference>
<dbReference type="PANTHER" id="PTHR45398:SF1">
    <property type="entry name" value="ENZYME, PUTATIVE (JCVI)-RELATED"/>
    <property type="match status" value="1"/>
</dbReference>
<dbReference type="Pfam" id="PF00501">
    <property type="entry name" value="AMP-binding"/>
    <property type="match status" value="1"/>
</dbReference>
<dbReference type="Pfam" id="PF13193">
    <property type="entry name" value="AMP-binding_C"/>
    <property type="match status" value="1"/>
</dbReference>
<dbReference type="SUPFAM" id="SSF56801">
    <property type="entry name" value="Acetyl-CoA synthetase-like"/>
    <property type="match status" value="1"/>
</dbReference>
<dbReference type="PROSITE" id="PS00455">
    <property type="entry name" value="AMP_BINDING"/>
    <property type="match status" value="1"/>
</dbReference>
<accession>B7JFV5</accession>
<sequence length="504" mass="56506">MKLLEQIEKWAIETPDQTAFVWRDAKITYKQLKEDSDALAHWISSEYPDDRSPIMVYGHMQPEMIINFLGCVKAGHAYIPVDLSIPADRVQRIAENSGAKLLLSAAAVTVTDLPVRIVSEDNLKDIFFTHKGNTPNPEHAVKGDENFYIIYTSGSTGNPKGVQITYNCLVSFTQWAVEDFNLQTGQVFLNQAPFSFDLSVMDIYPSLVTGGTLWAIDKDMIARPKDLFASLEQSDIQVWTSTPSFAEMCLMEASFSESMLPNMKTFLFCGEVLPNEVARKLIERFPKATIMNTYGPTEATVAVTGIHVTEEVLDQYKSLPVGYCKSDCRLLIMKEDGTIAPDGEKGEIVIVGPSVSVGYLGSPELTEKAFTMIDGERAYKTGDAGYVENGLLFYNGRLDFQIKLHGYRMELEEIEHHLRACSYVEGAVIVPIKKGEKYDYLLAVVVPGEHSFEKEFKLTSAIKKELNERLPNYMIPRKFMYQSSIPMTPNGKVDRKKLLSEVTA</sequence>
<protein>
    <recommendedName>
        <fullName evidence="1">D-alanine--D-alanyl carrier protein ligase</fullName>
        <shortName evidence="1">DCL</shortName>
        <ecNumber evidence="1">6.2.1.54</ecNumber>
    </recommendedName>
    <alternativeName>
        <fullName evidence="1">D-alanine--poly(phosphoribitol) ligase subunit 1</fullName>
    </alternativeName>
    <alternativeName>
        <fullName evidence="1">D-alanine-activating enzyme</fullName>
        <shortName evidence="1">DAE</shortName>
    </alternativeName>
</protein>
<comment type="function">
    <text evidence="1">Catalyzes the first step in the D-alanylation of lipoteichoic acid (LTA), the activation of D-alanine and its transfer onto the D-alanyl carrier protein (Dcp) DltC. In an ATP-dependent two-step reaction, forms a high energy D-alanyl-AMP intermediate, followed by transfer of the D-alanyl residue as a thiol ester to the phosphopantheinyl prosthetic group of the Dcp. D-alanylation of LTA plays an important role in modulating the properties of the cell wall in Gram-positive bacteria, influencing the net charge of the cell wall.</text>
</comment>
<comment type="catalytic activity">
    <reaction evidence="1">
        <text>holo-[D-alanyl-carrier protein] + D-alanine + ATP = D-alanyl-[D-alanyl-carrier protein] + AMP + diphosphate</text>
        <dbReference type="Rhea" id="RHEA:55132"/>
        <dbReference type="Rhea" id="RHEA-COMP:14102"/>
        <dbReference type="Rhea" id="RHEA-COMP:14103"/>
        <dbReference type="ChEBI" id="CHEBI:30616"/>
        <dbReference type="ChEBI" id="CHEBI:33019"/>
        <dbReference type="ChEBI" id="CHEBI:57416"/>
        <dbReference type="ChEBI" id="CHEBI:64479"/>
        <dbReference type="ChEBI" id="CHEBI:138620"/>
        <dbReference type="ChEBI" id="CHEBI:456215"/>
        <dbReference type="EC" id="6.2.1.54"/>
    </reaction>
</comment>
<comment type="pathway">
    <text evidence="1">Cell wall biogenesis; lipoteichoic acid biosynthesis.</text>
</comment>
<comment type="subcellular location">
    <subcellularLocation>
        <location evidence="1">Cytoplasm</location>
    </subcellularLocation>
</comment>
<comment type="similarity">
    <text evidence="1">Belongs to the ATP-dependent AMP-binding enzyme family. DltA subfamily.</text>
</comment>
<organism>
    <name type="scientific">Bacillus cereus (strain AH820)</name>
    <dbReference type="NCBI Taxonomy" id="405535"/>
    <lineage>
        <taxon>Bacteria</taxon>
        <taxon>Bacillati</taxon>
        <taxon>Bacillota</taxon>
        <taxon>Bacilli</taxon>
        <taxon>Bacillales</taxon>
        <taxon>Bacillaceae</taxon>
        <taxon>Bacillus</taxon>
        <taxon>Bacillus cereus group</taxon>
    </lineage>
</organism>
<name>DLTA_BACC0</name>
<reference key="1">
    <citation type="submission" date="2008-10" db="EMBL/GenBank/DDBJ databases">
        <title>Genome sequence of Bacillus cereus AH820.</title>
        <authorList>
            <person name="Dodson R.J."/>
            <person name="Durkin A.S."/>
            <person name="Rosovitz M.J."/>
            <person name="Rasko D.A."/>
            <person name="Hoffmaster A."/>
            <person name="Ravel J."/>
            <person name="Sutton G."/>
        </authorList>
    </citation>
    <scope>NUCLEOTIDE SEQUENCE [LARGE SCALE GENOMIC DNA]</scope>
    <source>
        <strain>AH820</strain>
    </source>
</reference>
<gene>
    <name evidence="1" type="primary">dltA</name>
    <name type="ordered locus">BCAH820_1461</name>
</gene>
<evidence type="ECO:0000255" key="1">
    <source>
        <dbReference type="HAMAP-Rule" id="MF_00593"/>
    </source>
</evidence>